<keyword id="KW-0020">Allergen</keyword>
<keyword id="KW-0732">Signal</keyword>
<accession>P56165</accession>
<organism>
    <name type="scientific">Phalaris aquatica</name>
    <name type="common">Canary grass</name>
    <dbReference type="NCBI Taxonomy" id="28479"/>
    <lineage>
        <taxon>Eukaryota</taxon>
        <taxon>Viridiplantae</taxon>
        <taxon>Streptophyta</taxon>
        <taxon>Embryophyta</taxon>
        <taxon>Tracheophyta</taxon>
        <taxon>Spermatophyta</taxon>
        <taxon>Magnoliopsida</taxon>
        <taxon>Liliopsida</taxon>
        <taxon>Poales</taxon>
        <taxon>Poaceae</taxon>
        <taxon>BOP clade</taxon>
        <taxon>Pooideae</taxon>
        <taxon>Poodae</taxon>
        <taxon>Poeae</taxon>
        <taxon>Poeae Chloroplast Group 1 (Aveneae type)</taxon>
        <taxon>Phalaridinae</taxon>
        <taxon>Phalaris</taxon>
    </lineage>
</organism>
<sequence length="305" mass="31370">MAVQKYTVALFLAVALVAGPAALYAGDGYAPATPAASATLATPATPAASPQHAGTTEYHIVRKAGLNEEKNAARQTDDEQKRSDEINCPDFNKSVHCRADRLPVCSSTSAHSSKQDVAWMLGYGSIQGFSMDDASVGSVSSEFHVIESAIEVITYIGEEVKVIPAGEVEVINKVKAAFSTAATAADEAPANDKFTVFVSSFNKAIKETTGGAYAGYKFIPTLEAAVKQAYAASSATAPEVKYAVFETALKKAISAMSEAQKEAKPAAAISAATTTISASTATPAAPPPPQLGTATPAAVAGGYKV</sequence>
<comment type="allergen">
    <text>Causes an allergic reaction in human. Causes grass pollen allergy.</text>
</comment>
<comment type="similarity">
    <text evidence="3">Belongs to the Poa p IX/Phl p VI allergen family.</text>
</comment>
<evidence type="ECO:0000255" key="1"/>
<evidence type="ECO:0000256" key="2">
    <source>
        <dbReference type="SAM" id="MobiDB-lite"/>
    </source>
</evidence>
<evidence type="ECO:0000305" key="3"/>
<proteinExistence type="evidence at protein level"/>
<reference key="1">
    <citation type="journal article" date="1995" name="Clin. Exp. Allergy">
        <title>Cloning, sequencing and expression in Escherichia coli of Pha a 1 and four isoforms of Pha a 5, the major allergens of canary grass pollen.</title>
        <authorList>
            <person name="Suphioglu C."/>
            <person name="Singh M.B."/>
        </authorList>
    </citation>
    <scope>NUCLEOTIDE SEQUENCE</scope>
    <source>
        <tissue>Pollen</tissue>
    </source>
</reference>
<name>MPA52_PHAAQ</name>
<protein>
    <recommendedName>
        <fullName>Major pollen allergen Pha a 5.2</fullName>
    </recommendedName>
    <alternativeName>
        <fullName>Allergen Pha a 5</fullName>
    </alternativeName>
    <allergenName>Pha a 5.2</allergenName>
</protein>
<feature type="signal peptide" evidence="1">
    <location>
        <begin position="1"/>
        <end position="25"/>
    </location>
</feature>
<feature type="chain" id="PRO_0000021740" description="Major pollen allergen Pha a 5.2">
    <location>
        <begin position="26"/>
        <end position="305"/>
    </location>
</feature>
<feature type="region of interest" description="Disordered" evidence="2">
    <location>
        <begin position="65"/>
        <end position="87"/>
    </location>
</feature>
<feature type="region of interest" description="Disordered" evidence="2">
    <location>
        <begin position="279"/>
        <end position="299"/>
    </location>
</feature>
<feature type="compositionally biased region" description="Basic and acidic residues" evidence="2">
    <location>
        <begin position="65"/>
        <end position="85"/>
    </location>
</feature>
<dbReference type="SMR" id="P56165"/>
<dbReference type="Allergome" id="548">
    <property type="allergen name" value="Pha a 5"/>
</dbReference>
<dbReference type="CDD" id="cd12805">
    <property type="entry name" value="Allergen_V_VI"/>
    <property type="match status" value="1"/>
</dbReference>
<dbReference type="Gene3D" id="1.20.120.320">
    <property type="entry name" value="Group V grass pollen allergen"/>
    <property type="match status" value="1"/>
</dbReference>
<dbReference type="InterPro" id="IPR035506">
    <property type="entry name" value="Pollen_allergen/Os"/>
</dbReference>
<dbReference type="SUPFAM" id="SSF81736">
    <property type="entry name" value="Group V grass pollen allergen"/>
    <property type="match status" value="1"/>
</dbReference>